<name>SECA_ENDTX</name>
<comment type="function">
    <text evidence="1">Part of the Sec protein translocase complex. Interacts with the SecYEG preprotein conducting channel. Has a central role in coupling the hydrolysis of ATP to the transfer of proteins into and across the cell membrane, serving as an ATP-driven molecular motor driving the stepwise translocation of polypeptide chains across the membrane.</text>
</comment>
<comment type="catalytic activity">
    <reaction evidence="1">
        <text>ATP + H2O + cellular proteinSide 1 = ADP + phosphate + cellular proteinSide 2.</text>
        <dbReference type="EC" id="7.4.2.8"/>
    </reaction>
</comment>
<comment type="cofactor">
    <cofactor evidence="1">
        <name>Zn(2+)</name>
        <dbReference type="ChEBI" id="CHEBI:29105"/>
    </cofactor>
    <text evidence="1">May bind 1 zinc ion per subunit.</text>
</comment>
<comment type="subunit">
    <text evidence="1">Monomer and homodimer. Part of the essential Sec protein translocation apparatus which comprises SecA, SecYEG and auxiliary proteins SecDF. Other proteins may also be involved.</text>
</comment>
<comment type="subcellular location">
    <subcellularLocation>
        <location evidence="1">Cell membrane</location>
        <topology evidence="1">Peripheral membrane protein</topology>
        <orientation evidence="1">Cytoplasmic side</orientation>
    </subcellularLocation>
    <subcellularLocation>
        <location evidence="1">Cytoplasm</location>
    </subcellularLocation>
    <text evidence="1">Distribution is 50-50.</text>
</comment>
<comment type="similarity">
    <text evidence="1">Belongs to the SecA family.</text>
</comment>
<protein>
    <recommendedName>
        <fullName evidence="1">Protein translocase subunit SecA</fullName>
        <ecNumber evidence="1">7.4.2.8</ecNumber>
    </recommendedName>
</protein>
<evidence type="ECO:0000255" key="1">
    <source>
        <dbReference type="HAMAP-Rule" id="MF_01382"/>
    </source>
</evidence>
<dbReference type="EC" id="7.4.2.8" evidence="1"/>
<dbReference type="EMBL" id="AP009510">
    <property type="protein sequence ID" value="BAG13850.1"/>
    <property type="molecule type" value="Genomic_DNA"/>
</dbReference>
<dbReference type="RefSeq" id="WP_015423377.1">
    <property type="nucleotide sequence ID" value="NC_020419.1"/>
</dbReference>
<dbReference type="SMR" id="B1H018"/>
<dbReference type="STRING" id="471821.TGRD_367"/>
<dbReference type="KEGG" id="rsd:TGRD_367"/>
<dbReference type="PATRIC" id="fig|471821.5.peg.601"/>
<dbReference type="HOGENOM" id="CLU_005314_3_0_0"/>
<dbReference type="Proteomes" id="UP000001691">
    <property type="component" value="Chromosome"/>
</dbReference>
<dbReference type="GO" id="GO:0031522">
    <property type="term" value="C:cell envelope Sec protein transport complex"/>
    <property type="evidence" value="ECO:0007669"/>
    <property type="project" value="TreeGrafter"/>
</dbReference>
<dbReference type="GO" id="GO:0005829">
    <property type="term" value="C:cytosol"/>
    <property type="evidence" value="ECO:0007669"/>
    <property type="project" value="TreeGrafter"/>
</dbReference>
<dbReference type="GO" id="GO:0005886">
    <property type="term" value="C:plasma membrane"/>
    <property type="evidence" value="ECO:0007669"/>
    <property type="project" value="UniProtKB-SubCell"/>
</dbReference>
<dbReference type="GO" id="GO:0005524">
    <property type="term" value="F:ATP binding"/>
    <property type="evidence" value="ECO:0007669"/>
    <property type="project" value="UniProtKB-UniRule"/>
</dbReference>
<dbReference type="GO" id="GO:0046872">
    <property type="term" value="F:metal ion binding"/>
    <property type="evidence" value="ECO:0007669"/>
    <property type="project" value="UniProtKB-KW"/>
</dbReference>
<dbReference type="GO" id="GO:0008564">
    <property type="term" value="F:protein-exporting ATPase activity"/>
    <property type="evidence" value="ECO:0007669"/>
    <property type="project" value="UniProtKB-EC"/>
</dbReference>
<dbReference type="GO" id="GO:0065002">
    <property type="term" value="P:intracellular protein transmembrane transport"/>
    <property type="evidence" value="ECO:0007669"/>
    <property type="project" value="UniProtKB-UniRule"/>
</dbReference>
<dbReference type="GO" id="GO:0017038">
    <property type="term" value="P:protein import"/>
    <property type="evidence" value="ECO:0007669"/>
    <property type="project" value="InterPro"/>
</dbReference>
<dbReference type="GO" id="GO:0006605">
    <property type="term" value="P:protein targeting"/>
    <property type="evidence" value="ECO:0007669"/>
    <property type="project" value="UniProtKB-UniRule"/>
</dbReference>
<dbReference type="GO" id="GO:0043952">
    <property type="term" value="P:protein transport by the Sec complex"/>
    <property type="evidence" value="ECO:0007669"/>
    <property type="project" value="TreeGrafter"/>
</dbReference>
<dbReference type="CDD" id="cd17928">
    <property type="entry name" value="DEXDc_SecA"/>
    <property type="match status" value="1"/>
</dbReference>
<dbReference type="CDD" id="cd18803">
    <property type="entry name" value="SF2_C_secA"/>
    <property type="match status" value="1"/>
</dbReference>
<dbReference type="FunFam" id="3.40.50.300:FF:000429">
    <property type="entry name" value="Preprotein translocase subunit SecA"/>
    <property type="match status" value="1"/>
</dbReference>
<dbReference type="FunFam" id="1.10.3060.10:FF:000003">
    <property type="entry name" value="Protein translocase subunit SecA"/>
    <property type="match status" value="1"/>
</dbReference>
<dbReference type="FunFam" id="3.40.50.300:FF:000334">
    <property type="entry name" value="Protein translocase subunit SecA"/>
    <property type="match status" value="1"/>
</dbReference>
<dbReference type="FunFam" id="3.90.1440.10:FF:000002">
    <property type="entry name" value="Protein translocase subunit SecA"/>
    <property type="match status" value="1"/>
</dbReference>
<dbReference type="Gene3D" id="1.10.3060.10">
    <property type="entry name" value="Helical scaffold and wing domains of SecA"/>
    <property type="match status" value="1"/>
</dbReference>
<dbReference type="Gene3D" id="3.40.50.300">
    <property type="entry name" value="P-loop containing nucleotide triphosphate hydrolases"/>
    <property type="match status" value="3"/>
</dbReference>
<dbReference type="Gene3D" id="3.90.1440.10">
    <property type="entry name" value="SecA, preprotein cross-linking domain"/>
    <property type="match status" value="1"/>
</dbReference>
<dbReference type="HAMAP" id="MF_01382">
    <property type="entry name" value="SecA"/>
    <property type="match status" value="1"/>
</dbReference>
<dbReference type="InterPro" id="IPR014001">
    <property type="entry name" value="Helicase_ATP-bd"/>
</dbReference>
<dbReference type="InterPro" id="IPR001650">
    <property type="entry name" value="Helicase_C-like"/>
</dbReference>
<dbReference type="InterPro" id="IPR027417">
    <property type="entry name" value="P-loop_NTPase"/>
</dbReference>
<dbReference type="InterPro" id="IPR004027">
    <property type="entry name" value="SEC_C_motif"/>
</dbReference>
<dbReference type="InterPro" id="IPR000185">
    <property type="entry name" value="SecA"/>
</dbReference>
<dbReference type="InterPro" id="IPR020937">
    <property type="entry name" value="SecA_CS"/>
</dbReference>
<dbReference type="InterPro" id="IPR011115">
    <property type="entry name" value="SecA_DEAD"/>
</dbReference>
<dbReference type="InterPro" id="IPR014018">
    <property type="entry name" value="SecA_motor_DEAD"/>
</dbReference>
<dbReference type="InterPro" id="IPR011130">
    <property type="entry name" value="SecA_preprotein_X-link_dom"/>
</dbReference>
<dbReference type="InterPro" id="IPR044722">
    <property type="entry name" value="SecA_SF2_C"/>
</dbReference>
<dbReference type="InterPro" id="IPR011116">
    <property type="entry name" value="SecA_Wing/Scaffold"/>
</dbReference>
<dbReference type="InterPro" id="IPR036266">
    <property type="entry name" value="SecA_Wing/Scaffold_sf"/>
</dbReference>
<dbReference type="InterPro" id="IPR036670">
    <property type="entry name" value="SecA_X-link_sf"/>
</dbReference>
<dbReference type="NCBIfam" id="NF006630">
    <property type="entry name" value="PRK09200.1"/>
    <property type="match status" value="1"/>
</dbReference>
<dbReference type="NCBIfam" id="NF009538">
    <property type="entry name" value="PRK12904.1"/>
    <property type="match status" value="1"/>
</dbReference>
<dbReference type="NCBIfam" id="TIGR00963">
    <property type="entry name" value="secA"/>
    <property type="match status" value="1"/>
</dbReference>
<dbReference type="PANTHER" id="PTHR30612:SF0">
    <property type="entry name" value="CHLOROPLAST PROTEIN-TRANSPORTING ATPASE"/>
    <property type="match status" value="1"/>
</dbReference>
<dbReference type="PANTHER" id="PTHR30612">
    <property type="entry name" value="SECA INNER MEMBRANE COMPONENT OF SEC PROTEIN SECRETION SYSTEM"/>
    <property type="match status" value="1"/>
</dbReference>
<dbReference type="Pfam" id="PF21090">
    <property type="entry name" value="P-loop_SecA"/>
    <property type="match status" value="1"/>
</dbReference>
<dbReference type="Pfam" id="PF02810">
    <property type="entry name" value="SEC-C"/>
    <property type="match status" value="1"/>
</dbReference>
<dbReference type="Pfam" id="PF07517">
    <property type="entry name" value="SecA_DEAD"/>
    <property type="match status" value="1"/>
</dbReference>
<dbReference type="Pfam" id="PF01043">
    <property type="entry name" value="SecA_PP_bind"/>
    <property type="match status" value="1"/>
</dbReference>
<dbReference type="Pfam" id="PF07516">
    <property type="entry name" value="SecA_SW"/>
    <property type="match status" value="1"/>
</dbReference>
<dbReference type="PRINTS" id="PR00906">
    <property type="entry name" value="SECA"/>
</dbReference>
<dbReference type="SMART" id="SM00957">
    <property type="entry name" value="SecA_DEAD"/>
    <property type="match status" value="1"/>
</dbReference>
<dbReference type="SMART" id="SM00958">
    <property type="entry name" value="SecA_PP_bind"/>
    <property type="match status" value="1"/>
</dbReference>
<dbReference type="SUPFAM" id="SSF81886">
    <property type="entry name" value="Helical scaffold and wing domains of SecA"/>
    <property type="match status" value="1"/>
</dbReference>
<dbReference type="SUPFAM" id="SSF52540">
    <property type="entry name" value="P-loop containing nucleoside triphosphate hydrolases"/>
    <property type="match status" value="2"/>
</dbReference>
<dbReference type="SUPFAM" id="SSF81767">
    <property type="entry name" value="Pre-protein crosslinking domain of SecA"/>
    <property type="match status" value="1"/>
</dbReference>
<dbReference type="PROSITE" id="PS01312">
    <property type="entry name" value="SECA"/>
    <property type="match status" value="1"/>
</dbReference>
<dbReference type="PROSITE" id="PS51196">
    <property type="entry name" value="SECA_MOTOR_DEAD"/>
    <property type="match status" value="1"/>
</dbReference>
<accession>B1H018</accession>
<proteinExistence type="inferred from homology"/>
<sequence>MLKTILVAIFGSQNDRDIKAIQPVIEKINALEPYIKKLTDVELKEKTVEFRERLSKGETLDDVLPEAFACVREASVRTIGLRHFDVQLIGGYILHKGKIAEMKTGEGKTLVATLAAYLNALPQTGVHIVTVNDYLAKRDKEWMGVVYEKLGLTVGNVGNETKNEERRMAYNCDITYITNNEIGFDYLRDNMVIAKDDRVLRPLNYAIIDEVDSILIDEARTPLIISGACAESTDKYYISDRIVPRLKGRIITENEEIKAKYADVDLAKGYDYLIDEKNHSAVLTEQGVQKAEKMLGVKNIYDDLQSEWVHHLTQAIKAHNLYRRDIEYVVKDGKVIIVDEFTGRLMPGRRWSDGLHQSIEVKENLKIADENQTLATITFQNFFRMYKKIAGMTGTATTESEEFWEIYKLGVIEVPTNNPMIRKDYHDVIYRTEREKDNAVVNEIESLWKKGQPVLVGTRSIEKSEKISTMLRIKGIPHQVLNAKYHELEAQIIAGAGTKSAVTIATNMAGRGTDILLGAGDAVQNEEVKKSGGLHIIGTERHESRRIDNQLRGRSGRQGDPGSSKFFLSMEDELMRLFGSDKMSVIMQKLGLKENEDIQHLWISKAVENAQKKVEGMNFDIRKRLIDFDNVMNKQREAVYKLRNEILEGQDITDTIKDMISESIEEKITAWAVGKYTEEWDWASIDVWLLRTFGIKYETGNKDEISNLSRESARSAISGKVFEAYEHRKEQLTPELMLNMQRIVLLQMIDSSWRDHLYELDQLRHDIGFRAYAQKDPKVEYQKESFALFESMMNRVRDNTIEYIFKVQIDAKLQKMAIQTTNSDFRKNDGKKINKGSNKIGRNDQCPCGSGKKFKKCCGA</sequence>
<keyword id="KW-0067">ATP-binding</keyword>
<keyword id="KW-1003">Cell membrane</keyword>
<keyword id="KW-0963">Cytoplasm</keyword>
<keyword id="KW-0472">Membrane</keyword>
<keyword id="KW-0479">Metal-binding</keyword>
<keyword id="KW-0547">Nucleotide-binding</keyword>
<keyword id="KW-0653">Protein transport</keyword>
<keyword id="KW-1278">Translocase</keyword>
<keyword id="KW-0811">Translocation</keyword>
<keyword id="KW-0813">Transport</keyword>
<keyword id="KW-0862">Zinc</keyword>
<feature type="chain" id="PRO_1000215122" description="Protein translocase subunit SecA">
    <location>
        <begin position="1"/>
        <end position="860"/>
    </location>
</feature>
<feature type="binding site" evidence="1">
    <location>
        <position position="87"/>
    </location>
    <ligand>
        <name>ATP</name>
        <dbReference type="ChEBI" id="CHEBI:30616"/>
    </ligand>
</feature>
<feature type="binding site" evidence="1">
    <location>
        <begin position="105"/>
        <end position="109"/>
    </location>
    <ligand>
        <name>ATP</name>
        <dbReference type="ChEBI" id="CHEBI:30616"/>
    </ligand>
</feature>
<feature type="binding site" evidence="1">
    <location>
        <position position="514"/>
    </location>
    <ligand>
        <name>ATP</name>
        <dbReference type="ChEBI" id="CHEBI:30616"/>
    </ligand>
</feature>
<feature type="binding site" evidence="1">
    <location>
        <position position="846"/>
    </location>
    <ligand>
        <name>Zn(2+)</name>
        <dbReference type="ChEBI" id="CHEBI:29105"/>
    </ligand>
</feature>
<feature type="binding site" evidence="1">
    <location>
        <position position="848"/>
    </location>
    <ligand>
        <name>Zn(2+)</name>
        <dbReference type="ChEBI" id="CHEBI:29105"/>
    </ligand>
</feature>
<feature type="binding site" evidence="1">
    <location>
        <position position="857"/>
    </location>
    <ligand>
        <name>Zn(2+)</name>
        <dbReference type="ChEBI" id="CHEBI:29105"/>
    </ligand>
</feature>
<feature type="binding site" evidence="1">
    <location>
        <position position="858"/>
    </location>
    <ligand>
        <name>Zn(2+)</name>
        <dbReference type="ChEBI" id="CHEBI:29105"/>
    </ligand>
</feature>
<organism>
    <name type="scientific">Endomicrobium trichonymphae</name>
    <dbReference type="NCBI Taxonomy" id="1408204"/>
    <lineage>
        <taxon>Bacteria</taxon>
        <taxon>Pseudomonadati</taxon>
        <taxon>Elusimicrobiota</taxon>
        <taxon>Endomicrobiia</taxon>
        <taxon>Endomicrobiales</taxon>
        <taxon>Endomicrobiaceae</taxon>
        <taxon>Candidatus Endomicrobiellum</taxon>
    </lineage>
</organism>
<gene>
    <name evidence="1" type="primary">secA</name>
    <name type="ordered locus">TGRD_367</name>
</gene>
<reference key="1">
    <citation type="journal article" date="2008" name="Proc. Natl. Acad. Sci. U.S.A.">
        <title>Complete genome of the uncultured termite group 1 bacteria in a single host protist cell.</title>
        <authorList>
            <person name="Hongoh Y."/>
            <person name="Sharma V.K."/>
            <person name="Prakash T."/>
            <person name="Noda S."/>
            <person name="Taylor T.D."/>
            <person name="Kudo T."/>
            <person name="Sakaki Y."/>
            <person name="Toyoda A."/>
            <person name="Hattori M."/>
            <person name="Ohkuma M."/>
        </authorList>
    </citation>
    <scope>NUCLEOTIDE SEQUENCE [LARGE SCALE GENOMIC DNA]</scope>
</reference>